<name>Y1309_BACC0</name>
<feature type="chain" id="PRO_1000145932" description="Putative phosphoesterase BCAH820_1309">
    <location>
        <begin position="1"/>
        <end position="172"/>
    </location>
</feature>
<feature type="short sequence motif" description="HXTX 1" evidence="1">
    <location>
        <begin position="34"/>
        <end position="37"/>
    </location>
</feature>
<feature type="short sequence motif" description="HXTX 2" evidence="1">
    <location>
        <begin position="115"/>
        <end position="118"/>
    </location>
</feature>
<feature type="active site" description="Proton donor" evidence="1">
    <location>
        <position position="34"/>
    </location>
</feature>
<feature type="active site" description="Proton acceptor" evidence="1">
    <location>
        <position position="115"/>
    </location>
</feature>
<dbReference type="EC" id="3.1.-.-" evidence="1"/>
<dbReference type="EMBL" id="CP001283">
    <property type="protein sequence ID" value="ACK88350.1"/>
    <property type="molecule type" value="Genomic_DNA"/>
</dbReference>
<dbReference type="RefSeq" id="WP_000765875.1">
    <property type="nucleotide sequence ID" value="NC_011773.1"/>
</dbReference>
<dbReference type="SMR" id="B7JER8"/>
<dbReference type="KEGG" id="bcu:BCAH820_1309"/>
<dbReference type="HOGENOM" id="CLU_132020_0_0_9"/>
<dbReference type="Proteomes" id="UP000001363">
    <property type="component" value="Chromosome"/>
</dbReference>
<dbReference type="GO" id="GO:0016788">
    <property type="term" value="F:hydrolase activity, acting on ester bonds"/>
    <property type="evidence" value="ECO:0007669"/>
    <property type="project" value="UniProtKB-UniRule"/>
</dbReference>
<dbReference type="Gene3D" id="3.90.1140.10">
    <property type="entry name" value="Cyclic phosphodiesterase"/>
    <property type="match status" value="1"/>
</dbReference>
<dbReference type="HAMAP" id="MF_01444">
    <property type="entry name" value="2H_phosphoesterase_YjcG"/>
    <property type="match status" value="1"/>
</dbReference>
<dbReference type="InterPro" id="IPR050580">
    <property type="entry name" value="2H_phosphoesterase_YjcG-like"/>
</dbReference>
<dbReference type="InterPro" id="IPR009097">
    <property type="entry name" value="Cyclic_Pdiesterase"/>
</dbReference>
<dbReference type="InterPro" id="IPR022932">
    <property type="entry name" value="YjcG"/>
</dbReference>
<dbReference type="NCBIfam" id="NF010223">
    <property type="entry name" value="PRK13679.1"/>
    <property type="match status" value="1"/>
</dbReference>
<dbReference type="PANTHER" id="PTHR40037:SF1">
    <property type="entry name" value="PHOSPHOESTERASE SAOUHSC_00951-RELATED"/>
    <property type="match status" value="1"/>
</dbReference>
<dbReference type="PANTHER" id="PTHR40037">
    <property type="entry name" value="PHOSPHOESTERASE YJCG-RELATED"/>
    <property type="match status" value="1"/>
</dbReference>
<dbReference type="Pfam" id="PF13563">
    <property type="entry name" value="2_5_RNA_ligase2"/>
    <property type="match status" value="1"/>
</dbReference>
<dbReference type="SUPFAM" id="SSF55144">
    <property type="entry name" value="LigT-like"/>
    <property type="match status" value="1"/>
</dbReference>
<evidence type="ECO:0000255" key="1">
    <source>
        <dbReference type="HAMAP-Rule" id="MF_01444"/>
    </source>
</evidence>
<comment type="similarity">
    <text evidence="1">Belongs to the 2H phosphoesterase superfamily. YjcG family.</text>
</comment>
<keyword id="KW-0378">Hydrolase</keyword>
<gene>
    <name type="ordered locus">BCAH820_1309</name>
</gene>
<organism>
    <name type="scientific">Bacillus cereus (strain AH820)</name>
    <dbReference type="NCBI Taxonomy" id="405535"/>
    <lineage>
        <taxon>Bacteria</taxon>
        <taxon>Bacillati</taxon>
        <taxon>Bacillota</taxon>
        <taxon>Bacilli</taxon>
        <taxon>Bacillales</taxon>
        <taxon>Bacillaceae</taxon>
        <taxon>Bacillus</taxon>
        <taxon>Bacillus cereus group</taxon>
    </lineage>
</organism>
<reference key="1">
    <citation type="submission" date="2008-10" db="EMBL/GenBank/DDBJ databases">
        <title>Genome sequence of Bacillus cereus AH820.</title>
        <authorList>
            <person name="Dodson R.J."/>
            <person name="Durkin A.S."/>
            <person name="Rosovitz M.J."/>
            <person name="Rasko D.A."/>
            <person name="Hoffmaster A."/>
            <person name="Ravel J."/>
            <person name="Sutton G."/>
        </authorList>
    </citation>
    <scope>NUCLEOTIDE SEQUENCE [LARGE SCALE GENOMIC DNA]</scope>
    <source>
        <strain>AH820</strain>
    </source>
</reference>
<proteinExistence type="inferred from homology"/>
<accession>B7JER8</accession>
<sequence>MKLGIVIFPSKMIQDKANGLRKRYDPHYALVPPHITLKTPFETQDEQLESIVNELHTIASKTNPFTLHVGKVGSFAPVNNVIYFKVEKTPELTFLNEEMHNGFFTQEREYAFVPHLTIGQGLSDAEHADVLGRLRMKDFYYEQPIDRFHLLYQLENGTWTVHETFRLGKGNN</sequence>
<protein>
    <recommendedName>
        <fullName evidence="1">Putative phosphoesterase BCAH820_1309</fullName>
        <ecNumber evidence="1">3.1.-.-</ecNumber>
    </recommendedName>
</protein>